<reference key="1">
    <citation type="journal article" date="2005" name="PLoS Biol.">
        <title>The genome sequence of Rickettsia felis identifies the first putative conjugative plasmid in an obligate intracellular parasite.</title>
        <authorList>
            <person name="Ogata H."/>
            <person name="Renesto P."/>
            <person name="Audic S."/>
            <person name="Robert C."/>
            <person name="Blanc G."/>
            <person name="Fournier P.-E."/>
            <person name="Parinello H."/>
            <person name="Claverie J.-M."/>
            <person name="Raoult D."/>
        </authorList>
    </citation>
    <scope>NUCLEOTIDE SEQUENCE [LARGE SCALE GENOMIC DNA]</scope>
    <source>
        <strain>ATCC VR-1525 / URRWXCal2</strain>
    </source>
</reference>
<name>ACNA_RICFE</name>
<dbReference type="EC" id="4.2.1.3" evidence="3"/>
<dbReference type="EC" id="4.2.1.99" evidence="3"/>
<dbReference type="EMBL" id="CP000053">
    <property type="protein sequence ID" value="AAY62115.1"/>
    <property type="molecule type" value="Genomic_DNA"/>
</dbReference>
<dbReference type="SMR" id="Q4UK20"/>
<dbReference type="STRING" id="315456.RF_1264"/>
<dbReference type="KEGG" id="rfe:RF_1264"/>
<dbReference type="eggNOG" id="COG1048">
    <property type="taxonomic scope" value="Bacteria"/>
</dbReference>
<dbReference type="HOGENOM" id="CLU_013476_2_1_5"/>
<dbReference type="OrthoDB" id="9764318at2"/>
<dbReference type="UniPathway" id="UPA00223">
    <property type="reaction ID" value="UER00718"/>
</dbReference>
<dbReference type="UniPathway" id="UPA00946"/>
<dbReference type="Proteomes" id="UP000008548">
    <property type="component" value="Chromosome"/>
</dbReference>
<dbReference type="GO" id="GO:0047456">
    <property type="term" value="F:2-methylisocitrate dehydratase activity"/>
    <property type="evidence" value="ECO:0000250"/>
    <property type="project" value="UniProtKB"/>
</dbReference>
<dbReference type="GO" id="GO:0051539">
    <property type="term" value="F:4 iron, 4 sulfur cluster binding"/>
    <property type="evidence" value="ECO:0000250"/>
    <property type="project" value="UniProtKB"/>
</dbReference>
<dbReference type="GO" id="GO:0003994">
    <property type="term" value="F:aconitate hydratase activity"/>
    <property type="evidence" value="ECO:0000250"/>
    <property type="project" value="UniProtKB"/>
</dbReference>
<dbReference type="GO" id="GO:0046872">
    <property type="term" value="F:metal ion binding"/>
    <property type="evidence" value="ECO:0007669"/>
    <property type="project" value="UniProtKB-KW"/>
</dbReference>
<dbReference type="GO" id="GO:0003730">
    <property type="term" value="F:mRNA 3'-UTR binding"/>
    <property type="evidence" value="ECO:0000250"/>
    <property type="project" value="UniProtKB"/>
</dbReference>
<dbReference type="GO" id="GO:0003729">
    <property type="term" value="F:mRNA binding"/>
    <property type="evidence" value="ECO:0000250"/>
    <property type="project" value="UniProtKB"/>
</dbReference>
<dbReference type="GO" id="GO:0019679">
    <property type="term" value="P:propionate metabolic process, methylcitrate cycle"/>
    <property type="evidence" value="ECO:0000250"/>
    <property type="project" value="UniProtKB"/>
</dbReference>
<dbReference type="GO" id="GO:0006099">
    <property type="term" value="P:tricarboxylic acid cycle"/>
    <property type="evidence" value="ECO:0000250"/>
    <property type="project" value="UniProtKB"/>
</dbReference>
<dbReference type="CDD" id="cd01586">
    <property type="entry name" value="AcnA_IRP"/>
    <property type="match status" value="1"/>
</dbReference>
<dbReference type="CDD" id="cd01580">
    <property type="entry name" value="AcnA_IRP_Swivel"/>
    <property type="match status" value="1"/>
</dbReference>
<dbReference type="FunFam" id="3.20.19.10:FF:000001">
    <property type="entry name" value="Aconitate hydratase"/>
    <property type="match status" value="1"/>
</dbReference>
<dbReference type="FunFam" id="3.30.499.10:FF:000002">
    <property type="entry name" value="Aconitate hydratase"/>
    <property type="match status" value="1"/>
</dbReference>
<dbReference type="FunFam" id="3.30.499.10:FF:000020">
    <property type="entry name" value="Aconitate hydratase A"/>
    <property type="match status" value="1"/>
</dbReference>
<dbReference type="Gene3D" id="6.10.190.10">
    <property type="match status" value="1"/>
</dbReference>
<dbReference type="Gene3D" id="3.30.499.10">
    <property type="entry name" value="Aconitase, domain 3"/>
    <property type="match status" value="2"/>
</dbReference>
<dbReference type="Gene3D" id="3.20.19.10">
    <property type="entry name" value="Aconitase, domain 4"/>
    <property type="match status" value="1"/>
</dbReference>
<dbReference type="InterPro" id="IPR044137">
    <property type="entry name" value="AcnA_IRP_Swivel"/>
</dbReference>
<dbReference type="InterPro" id="IPR015931">
    <property type="entry name" value="Acnase/IPM_dHydase_lsu_aba_1/3"/>
</dbReference>
<dbReference type="InterPro" id="IPR001030">
    <property type="entry name" value="Acoase/IPM_deHydtase_lsu_aba"/>
</dbReference>
<dbReference type="InterPro" id="IPR015928">
    <property type="entry name" value="Aconitase/3IPM_dehydase_swvl"/>
</dbReference>
<dbReference type="InterPro" id="IPR006249">
    <property type="entry name" value="Aconitase/IRP2"/>
</dbReference>
<dbReference type="InterPro" id="IPR018136">
    <property type="entry name" value="Aconitase_4Fe-4S_BS"/>
</dbReference>
<dbReference type="InterPro" id="IPR036008">
    <property type="entry name" value="Aconitase_4Fe-4S_dom"/>
</dbReference>
<dbReference type="InterPro" id="IPR000573">
    <property type="entry name" value="AconitaseA/IPMdHydase_ssu_swvl"/>
</dbReference>
<dbReference type="NCBIfam" id="TIGR01341">
    <property type="entry name" value="aconitase_1"/>
    <property type="match status" value="1"/>
</dbReference>
<dbReference type="NCBIfam" id="NF006757">
    <property type="entry name" value="PRK09277.1"/>
    <property type="match status" value="1"/>
</dbReference>
<dbReference type="NCBIfam" id="NF009520">
    <property type="entry name" value="PRK12881.1"/>
    <property type="match status" value="1"/>
</dbReference>
<dbReference type="PANTHER" id="PTHR11670">
    <property type="entry name" value="ACONITASE/IRON-RESPONSIVE ELEMENT FAMILY MEMBER"/>
    <property type="match status" value="1"/>
</dbReference>
<dbReference type="Pfam" id="PF00330">
    <property type="entry name" value="Aconitase"/>
    <property type="match status" value="1"/>
</dbReference>
<dbReference type="Pfam" id="PF00694">
    <property type="entry name" value="Aconitase_C"/>
    <property type="match status" value="1"/>
</dbReference>
<dbReference type="PRINTS" id="PR00415">
    <property type="entry name" value="ACONITASE"/>
</dbReference>
<dbReference type="SUPFAM" id="SSF53732">
    <property type="entry name" value="Aconitase iron-sulfur domain"/>
    <property type="match status" value="1"/>
</dbReference>
<dbReference type="SUPFAM" id="SSF52016">
    <property type="entry name" value="LeuD/IlvD-like"/>
    <property type="match status" value="1"/>
</dbReference>
<dbReference type="PROSITE" id="PS00450">
    <property type="entry name" value="ACONITASE_1"/>
    <property type="match status" value="1"/>
</dbReference>
<dbReference type="PROSITE" id="PS01244">
    <property type="entry name" value="ACONITASE_2"/>
    <property type="match status" value="1"/>
</dbReference>
<sequence length="878" mass="97271">MSKVHNSEYIKELSVDNTSYKIYDINKAASDIELPLKKLPYSLRVLFENVLRSNGSKQNLLVFKEWLKTKESDAEIDFMPARVLMQDFTGVPAIVDLAAMRDAMKKIGGDPLKINPLIPVDLVIDHSVSVDSYAAKDSFDKNVQMEMKRNIERYQFLKWGQQAFNNFKVVPPGTGICHQVNLEYLAKVVWHKDGLAYPDSLVGTDSHTTMVNGLSVLGWGVGGIEAEAAMLGQPLTMILPEVIGVKLTGKLTGIATATDLVLTVTEMLRKKKVVGKFVEFFGEGLKNLTIADRATISNMSPEYGATCGFFPIDQETIKYLELTGREKTQIKLVEKYANEQNLWYDFEHEAEYTEILELDLSMVHSSLAGPRRPQDRVDLNDVANNFKHELPNFGIENKDIDKKYAVANQNYEIGNGDVVIAAITSCTNTSNPSVMIGAALLAKKALEHGLKVKPWVKTSLAPGSKVVTEYLKLSGLDKYLDELGFNLVGYGCTTCIGNSGPLNPEIEETINKNGLVVASVLSGNRNFEGRINPLTKASYLGSPILVVAYALSGTLNIDLNNQPIGKNIYLKDIWPSKEEIDEVIANSINSSMFIEKYSDIFSGTKEWKDLQITTSSTYNWNKNSTYINNPPYFEDIGSKNNIKDIKSAKILAIFGDSITTDHISPAGSISKTSPAAKYLTDNHIEPLDFNSYGSRRGNHEVMMRGTFANIRIKNEMCKGVEGGFTINQLSSTQQTIYDAAMDYKANDVPVVIFAGKEYGSGSSRDWAAKGPQLLGVKAVIAESFERIHRSNLVGMGILPLTFTGNNTRLDLKLDGSETIDIIGLSEQIKPYNPVKCMIKKQTGETRTIDLILQIFTDNEINYIKHGSIMHFVVENLKG</sequence>
<gene>
    <name type="primary">acnA</name>
    <name type="ordered locus">RF_1264</name>
</gene>
<accession>Q4UK20</accession>
<organism>
    <name type="scientific">Rickettsia felis (strain ATCC VR-1525 / URRWXCal2)</name>
    <name type="common">Rickettsia azadi</name>
    <dbReference type="NCBI Taxonomy" id="315456"/>
    <lineage>
        <taxon>Bacteria</taxon>
        <taxon>Pseudomonadati</taxon>
        <taxon>Pseudomonadota</taxon>
        <taxon>Alphaproteobacteria</taxon>
        <taxon>Rickettsiales</taxon>
        <taxon>Rickettsiaceae</taxon>
        <taxon>Rickettsieae</taxon>
        <taxon>Rickettsia</taxon>
        <taxon>spotted fever group</taxon>
    </lineage>
</organism>
<comment type="function">
    <text evidence="1 3">Involved in the catabolism of short chain fatty acids (SCFA) via the tricarboxylic acid (TCA)(acetyl degradation route) and probably the 2-methylcitrate cycle I (propionate degradation route). Catalyzes the reversible isomerization of citrate to isocitrate via cis-aconitate. Could catalyze the hydration of 2-methyl-cis-aconitate to yield (2R,3S)-2-methylisocitrate. The apo form of AcnA functions as a RNA-binding regulatory protein.</text>
</comment>
<comment type="catalytic activity">
    <reaction evidence="3">
        <text>citrate = D-threo-isocitrate</text>
        <dbReference type="Rhea" id="RHEA:10336"/>
        <dbReference type="ChEBI" id="CHEBI:15562"/>
        <dbReference type="ChEBI" id="CHEBI:16947"/>
        <dbReference type="EC" id="4.2.1.3"/>
    </reaction>
</comment>
<comment type="catalytic activity">
    <reaction evidence="3">
        <text>(2S,3R)-3-hydroxybutane-1,2,3-tricarboxylate = 2-methyl-cis-aconitate + H2O</text>
        <dbReference type="Rhea" id="RHEA:17941"/>
        <dbReference type="ChEBI" id="CHEBI:15377"/>
        <dbReference type="ChEBI" id="CHEBI:57429"/>
        <dbReference type="ChEBI" id="CHEBI:57872"/>
        <dbReference type="EC" id="4.2.1.99"/>
    </reaction>
</comment>
<comment type="cofactor">
    <cofactor evidence="1">
        <name>[4Fe-4S] cluster</name>
        <dbReference type="ChEBI" id="CHEBI:49883"/>
    </cofactor>
    <text evidence="1">Binds 1 [4Fe-4S] cluster per subunit.</text>
</comment>
<comment type="pathway">
    <text evidence="3">Carbohydrate metabolism; tricarboxylic acid cycle; isocitrate from oxaloacetate: step 2/2.</text>
</comment>
<comment type="pathway">
    <text evidence="3">Organic acid metabolism; propanoate degradation.</text>
</comment>
<comment type="subunit">
    <text evidence="1">Monomer.</text>
</comment>
<comment type="similarity">
    <text evidence="4">Belongs to the aconitase/IPM isomerase family.</text>
</comment>
<proteinExistence type="inferred from homology"/>
<keyword id="KW-0004">4Fe-4S</keyword>
<keyword id="KW-0408">Iron</keyword>
<keyword id="KW-0411">Iron-sulfur</keyword>
<keyword id="KW-0456">Lyase</keyword>
<keyword id="KW-0479">Metal-binding</keyword>
<keyword id="KW-0694">RNA-binding</keyword>
<keyword id="KW-0816">Tricarboxylic acid cycle</keyword>
<protein>
    <recommendedName>
        <fullName evidence="3">Aconitate hydratase A</fullName>
        <shortName evidence="3">ACN</shortName>
        <shortName evidence="3">Aconitase</shortName>
        <ecNumber evidence="3">4.2.1.3</ecNumber>
    </recommendedName>
    <alternativeName>
        <fullName evidence="3">(2R,3S)-2-methylisocitrate dehydratase</fullName>
    </alternativeName>
    <alternativeName>
        <fullName evidence="3">(2S,3R)-3-hydroxybutane-1,2,3-tricarboxylate dehydratase</fullName>
    </alternativeName>
    <alternativeName>
        <fullName evidence="1">Iron-responsive protein-like</fullName>
        <shortName evidence="1">IRP-like</shortName>
    </alternativeName>
    <alternativeName>
        <fullName evidence="3">Probable 2-methyl-cis-aconitate hydratase</fullName>
        <ecNumber evidence="3">4.2.1.99</ecNumber>
    </alternativeName>
    <alternativeName>
        <fullName evidence="1">RNA-binding protein</fullName>
    </alternativeName>
</protein>
<evidence type="ECO:0000250" key="1">
    <source>
        <dbReference type="UniProtKB" id="P09339"/>
    </source>
</evidence>
<evidence type="ECO:0000250" key="2">
    <source>
        <dbReference type="UniProtKB" id="P36683"/>
    </source>
</evidence>
<evidence type="ECO:0000250" key="3">
    <source>
        <dbReference type="UniProtKB" id="Q8ZP52"/>
    </source>
</evidence>
<evidence type="ECO:0000305" key="4"/>
<feature type="chain" id="PRO_0000272343" description="Aconitate hydratase A">
    <location>
        <begin position="1"/>
        <end position="878"/>
    </location>
</feature>
<feature type="binding site" evidence="2">
    <location>
        <position position="426"/>
    </location>
    <ligand>
        <name>[4Fe-4S] cluster</name>
        <dbReference type="ChEBI" id="CHEBI:49883"/>
    </ligand>
</feature>
<feature type="binding site" evidence="2">
    <location>
        <position position="492"/>
    </location>
    <ligand>
        <name>[4Fe-4S] cluster</name>
        <dbReference type="ChEBI" id="CHEBI:49883"/>
    </ligand>
</feature>
<feature type="binding site" evidence="2">
    <location>
        <position position="495"/>
    </location>
    <ligand>
        <name>[4Fe-4S] cluster</name>
        <dbReference type="ChEBI" id="CHEBI:49883"/>
    </ligand>
</feature>